<name>NTRB_RHILP</name>
<proteinExistence type="inferred from homology"/>
<accession>P41503</accession>
<gene>
    <name type="primary">ntrB</name>
</gene>
<feature type="chain" id="PRO_0000074830" description="Sensory histidine kinase/phosphatase NtrB">
    <location>
        <begin position="1"/>
        <end position="383"/>
    </location>
</feature>
<feature type="domain" description="Histidine kinase" evidence="2">
    <location>
        <begin position="147"/>
        <end position="366"/>
    </location>
</feature>
<feature type="modified residue" description="Phosphohistidine; by autocatalysis" evidence="2">
    <location>
        <position position="150"/>
    </location>
</feature>
<reference key="1">
    <citation type="journal article" date="1993" name="Mol. Microbiol.">
        <title>The ntrBC genes of Rhizobium leguminosarum are part of a complex operon subject to negative regulation.</title>
        <authorList>
            <person name="Patriarca E.J."/>
            <person name="Riccio A."/>
            <person name="Tate R."/>
            <person name="Colonna-Romano S."/>
            <person name="Iaccarino M."/>
            <person name="Defez R."/>
        </authorList>
    </citation>
    <scope>NUCLEOTIDE SEQUENCE [GENOMIC DNA]</scope>
    <source>
        <strain>CE-3</strain>
    </source>
</reference>
<keyword id="KW-0067">ATP-binding</keyword>
<keyword id="KW-0963">Cytoplasm</keyword>
<keyword id="KW-0378">Hydrolase</keyword>
<keyword id="KW-0418">Kinase</keyword>
<keyword id="KW-0535">Nitrogen fixation</keyword>
<keyword id="KW-0547">Nucleotide-binding</keyword>
<keyword id="KW-0597">Phosphoprotein</keyword>
<keyword id="KW-0808">Transferase</keyword>
<keyword id="KW-0902">Two-component regulatory system</keyword>
<protein>
    <recommendedName>
        <fullName evidence="1">Sensory histidine kinase/phosphatase NtrB</fullName>
        <ecNumber evidence="1">2.7.13.3</ecNumber>
        <ecNumber evidence="1">3.1.3.-</ecNumber>
    </recommendedName>
    <alternativeName>
        <fullName evidence="1">Nitrogen regulation protein NR(II)</fullName>
    </alternativeName>
    <alternativeName>
        <fullName evidence="1">Nitrogen regulator II</fullName>
        <shortName evidence="1">NRII</shortName>
    </alternativeName>
</protein>
<evidence type="ECO:0000250" key="1">
    <source>
        <dbReference type="UniProtKB" id="P0AFB5"/>
    </source>
</evidence>
<evidence type="ECO:0000255" key="2">
    <source>
        <dbReference type="PROSITE-ProRule" id="PRU00107"/>
    </source>
</evidence>
<sequence>MTKDTTSPPDQAGGTVAMAVLNAIQNPVVMVDESGFIAFANWEAEAFFGAAFASGALPDLDIHSFGSPLLALVDQVRTQGSPVNEYRVDLSSPRLGQDKLVDLYVAPVLSEPGGVVIVFQERSMADKIDRQLTHRAAARSVTGLASSLAHEIKNPLSGNRGAAQLLEQSVIDDDRALTRLICDETDRIVSLVDRMEVFSDERPVRRMPVNIHSVLDHVKRLAQSGFARNIRITESYDPSLPAVYANRDQLVQVFLNLVKNAAEAVGDRPDGEIMLTTAYRPGIRLSVAGTREKISLPLEFCVHDNGPGVPADLLPHLFDPFITTKTNGSGLGLALVAKIIGDHGGIIECDSQNSRTTFRVLMPASKDASLEDASSASSTGPSR</sequence>
<comment type="function">
    <text evidence="1">Member of the two-component regulatory system NtrB/NtrC, which controls expression of the nitrogen-regulated (ntr) genes in response to nitrogen limitation. Under conditions of nitrogen limitation, NtrB autophosphorylates and transfers the phosphoryl group to NtrC. In the presence of nitrogen, acts as a phosphatase that dephosphorylates and inactivates NtrC.</text>
</comment>
<comment type="catalytic activity">
    <reaction evidence="1">
        <text>ATP + protein L-histidine = ADP + protein N-phospho-L-histidine.</text>
        <dbReference type="EC" id="2.7.13.3"/>
    </reaction>
</comment>
<comment type="subcellular location">
    <subcellularLocation>
        <location evidence="1">Cytoplasm</location>
    </subcellularLocation>
</comment>
<comment type="PTM">
    <text evidence="1">Autophosphorylated.</text>
</comment>
<organism>
    <name type="scientific">Rhizobium leguminosarum bv. phaseoli</name>
    <dbReference type="NCBI Taxonomy" id="385"/>
    <lineage>
        <taxon>Bacteria</taxon>
        <taxon>Pseudomonadati</taxon>
        <taxon>Pseudomonadota</taxon>
        <taxon>Alphaproteobacteria</taxon>
        <taxon>Hyphomicrobiales</taxon>
        <taxon>Rhizobiaceae</taxon>
        <taxon>Rhizobium/Agrobacterium group</taxon>
        <taxon>Rhizobium</taxon>
    </lineage>
</organism>
<dbReference type="EC" id="2.7.13.3" evidence="1"/>
<dbReference type="EC" id="3.1.3.-" evidence="1"/>
<dbReference type="EMBL" id="X71436">
    <property type="protein sequence ID" value="CAA50568.1"/>
    <property type="molecule type" value="Genomic_DNA"/>
</dbReference>
<dbReference type="PIR" id="S36202">
    <property type="entry name" value="S36202"/>
</dbReference>
<dbReference type="SMR" id="P41503"/>
<dbReference type="BRENDA" id="2.7.13.3">
    <property type="organism ID" value="5343"/>
</dbReference>
<dbReference type="GO" id="GO:0005737">
    <property type="term" value="C:cytoplasm"/>
    <property type="evidence" value="ECO:0007669"/>
    <property type="project" value="UniProtKB-SubCell"/>
</dbReference>
<dbReference type="GO" id="GO:0005524">
    <property type="term" value="F:ATP binding"/>
    <property type="evidence" value="ECO:0007669"/>
    <property type="project" value="UniProtKB-KW"/>
</dbReference>
<dbReference type="GO" id="GO:0016787">
    <property type="term" value="F:hydrolase activity"/>
    <property type="evidence" value="ECO:0007669"/>
    <property type="project" value="UniProtKB-KW"/>
</dbReference>
<dbReference type="GO" id="GO:0000155">
    <property type="term" value="F:phosphorelay sensor kinase activity"/>
    <property type="evidence" value="ECO:0007669"/>
    <property type="project" value="InterPro"/>
</dbReference>
<dbReference type="GO" id="GO:0009399">
    <property type="term" value="P:nitrogen fixation"/>
    <property type="evidence" value="ECO:0007669"/>
    <property type="project" value="UniProtKB-KW"/>
</dbReference>
<dbReference type="CDD" id="cd00082">
    <property type="entry name" value="HisKA"/>
    <property type="match status" value="1"/>
</dbReference>
<dbReference type="Gene3D" id="1.10.287.130">
    <property type="match status" value="1"/>
</dbReference>
<dbReference type="Gene3D" id="3.30.565.10">
    <property type="entry name" value="Histidine kinase-like ATPase, C-terminal domain"/>
    <property type="match status" value="1"/>
</dbReference>
<dbReference type="Gene3D" id="3.30.450.20">
    <property type="entry name" value="PAS domain"/>
    <property type="match status" value="1"/>
</dbReference>
<dbReference type="InterPro" id="IPR036890">
    <property type="entry name" value="HATPase_C_sf"/>
</dbReference>
<dbReference type="InterPro" id="IPR005467">
    <property type="entry name" value="His_kinase_dom"/>
</dbReference>
<dbReference type="InterPro" id="IPR003661">
    <property type="entry name" value="HisK_dim/P_dom"/>
</dbReference>
<dbReference type="InterPro" id="IPR036097">
    <property type="entry name" value="HisK_dim/P_sf"/>
</dbReference>
<dbReference type="InterPro" id="IPR004358">
    <property type="entry name" value="Sig_transdc_His_kin-like_C"/>
</dbReference>
<dbReference type="PANTHER" id="PTHR43065:SF10">
    <property type="entry name" value="PEROXIDE STRESS-ACTIVATED HISTIDINE KINASE MAK3"/>
    <property type="match status" value="1"/>
</dbReference>
<dbReference type="PANTHER" id="PTHR43065">
    <property type="entry name" value="SENSOR HISTIDINE KINASE"/>
    <property type="match status" value="1"/>
</dbReference>
<dbReference type="Pfam" id="PF02518">
    <property type="entry name" value="HATPase_c"/>
    <property type="match status" value="1"/>
</dbReference>
<dbReference type="Pfam" id="PF00512">
    <property type="entry name" value="HisKA"/>
    <property type="match status" value="1"/>
</dbReference>
<dbReference type="PRINTS" id="PR00344">
    <property type="entry name" value="BCTRLSENSOR"/>
</dbReference>
<dbReference type="SMART" id="SM00387">
    <property type="entry name" value="HATPase_c"/>
    <property type="match status" value="1"/>
</dbReference>
<dbReference type="SMART" id="SM00388">
    <property type="entry name" value="HisKA"/>
    <property type="match status" value="1"/>
</dbReference>
<dbReference type="SUPFAM" id="SSF55874">
    <property type="entry name" value="ATPase domain of HSP90 chaperone/DNA topoisomerase II/histidine kinase"/>
    <property type="match status" value="1"/>
</dbReference>
<dbReference type="SUPFAM" id="SSF47384">
    <property type="entry name" value="Homodimeric domain of signal transducing histidine kinase"/>
    <property type="match status" value="1"/>
</dbReference>
<dbReference type="PROSITE" id="PS50109">
    <property type="entry name" value="HIS_KIN"/>
    <property type="match status" value="1"/>
</dbReference>